<sequence length="153" mass="17121">MTHDNKLQVEAIKRGTVIDHIPAQIGFKLLSLFKLTETDQRITIGLNLPSGEMGRKDLIKIENTFLSEDQVDQLALYAPQATVNRIDNYEVVGKSRPSLPERIDNVLVCPNSNCISHAEPVSSSFAVRKRANDIALKCKYCEKEFSHNVVLAN</sequence>
<feature type="chain" id="PRO_1000193107" description="Aspartate carbamoyltransferase regulatory chain">
    <location>
        <begin position="1"/>
        <end position="153"/>
    </location>
</feature>
<feature type="binding site" evidence="1">
    <location>
        <position position="109"/>
    </location>
    <ligand>
        <name>Zn(2+)</name>
        <dbReference type="ChEBI" id="CHEBI:29105"/>
    </ligand>
</feature>
<feature type="binding site" evidence="1">
    <location>
        <position position="114"/>
    </location>
    <ligand>
        <name>Zn(2+)</name>
        <dbReference type="ChEBI" id="CHEBI:29105"/>
    </ligand>
</feature>
<feature type="binding site" evidence="1">
    <location>
        <position position="138"/>
    </location>
    <ligand>
        <name>Zn(2+)</name>
        <dbReference type="ChEBI" id="CHEBI:29105"/>
    </ligand>
</feature>
<feature type="binding site" evidence="1">
    <location>
        <position position="141"/>
    </location>
    <ligand>
        <name>Zn(2+)</name>
        <dbReference type="ChEBI" id="CHEBI:29105"/>
    </ligand>
</feature>
<reference key="1">
    <citation type="journal article" date="2008" name="J. Bacteriol.">
        <title>Insights into the environmental resistance gene pool from the genome sequence of the multidrug-resistant environmental isolate Escherichia coli SMS-3-5.</title>
        <authorList>
            <person name="Fricke W.F."/>
            <person name="Wright M.S."/>
            <person name="Lindell A.H."/>
            <person name="Harkins D.M."/>
            <person name="Baker-Austin C."/>
            <person name="Ravel J."/>
            <person name="Stepanauskas R."/>
        </authorList>
    </citation>
    <scope>NUCLEOTIDE SEQUENCE [LARGE SCALE GENOMIC DNA]</scope>
    <source>
        <strain>SMS-3-5 / SECEC</strain>
    </source>
</reference>
<accession>B1LRD1</accession>
<name>PYRI_ECOSM</name>
<protein>
    <recommendedName>
        <fullName evidence="1">Aspartate carbamoyltransferase regulatory chain</fullName>
    </recommendedName>
</protein>
<dbReference type="EMBL" id="CP000970">
    <property type="protein sequence ID" value="ACB18190.1"/>
    <property type="molecule type" value="Genomic_DNA"/>
</dbReference>
<dbReference type="RefSeq" id="WP_000148581.1">
    <property type="nucleotide sequence ID" value="NC_010498.1"/>
</dbReference>
<dbReference type="SMR" id="B1LRD1"/>
<dbReference type="GeneID" id="93777580"/>
<dbReference type="KEGG" id="ecm:EcSMS35_4725"/>
<dbReference type="HOGENOM" id="CLU_128576_0_0_6"/>
<dbReference type="Proteomes" id="UP000007011">
    <property type="component" value="Chromosome"/>
</dbReference>
<dbReference type="GO" id="GO:0009347">
    <property type="term" value="C:aspartate carbamoyltransferase complex"/>
    <property type="evidence" value="ECO:0007669"/>
    <property type="project" value="InterPro"/>
</dbReference>
<dbReference type="GO" id="GO:0046872">
    <property type="term" value="F:metal ion binding"/>
    <property type="evidence" value="ECO:0007669"/>
    <property type="project" value="UniProtKB-KW"/>
</dbReference>
<dbReference type="GO" id="GO:0006207">
    <property type="term" value="P:'de novo' pyrimidine nucleobase biosynthetic process"/>
    <property type="evidence" value="ECO:0007669"/>
    <property type="project" value="InterPro"/>
</dbReference>
<dbReference type="GO" id="GO:0006221">
    <property type="term" value="P:pyrimidine nucleotide biosynthetic process"/>
    <property type="evidence" value="ECO:0007669"/>
    <property type="project" value="UniProtKB-UniRule"/>
</dbReference>
<dbReference type="FunFam" id="2.30.30.20:FF:000001">
    <property type="entry name" value="Aspartate carbamoyltransferase regulatory chain"/>
    <property type="match status" value="1"/>
</dbReference>
<dbReference type="FunFam" id="3.30.70.140:FF:000001">
    <property type="entry name" value="Aspartate carbamoyltransferase regulatory chain"/>
    <property type="match status" value="1"/>
</dbReference>
<dbReference type="Gene3D" id="2.30.30.20">
    <property type="entry name" value="Aspartate carbamoyltransferase regulatory subunit, C-terminal domain"/>
    <property type="match status" value="1"/>
</dbReference>
<dbReference type="Gene3D" id="3.30.70.140">
    <property type="entry name" value="Aspartate carbamoyltransferase regulatory subunit, N-terminal domain"/>
    <property type="match status" value="1"/>
</dbReference>
<dbReference type="HAMAP" id="MF_00002">
    <property type="entry name" value="Asp_carb_tr_reg"/>
    <property type="match status" value="1"/>
</dbReference>
<dbReference type="InterPro" id="IPR020545">
    <property type="entry name" value="Asp_carbamoyltransf_reg_N"/>
</dbReference>
<dbReference type="InterPro" id="IPR002801">
    <property type="entry name" value="Asp_carbamoylTrfase_reg"/>
</dbReference>
<dbReference type="InterPro" id="IPR020542">
    <property type="entry name" value="Asp_carbamoyltrfase_reg_C"/>
</dbReference>
<dbReference type="InterPro" id="IPR036792">
    <property type="entry name" value="Asp_carbatrfase_reg_C_sf"/>
</dbReference>
<dbReference type="InterPro" id="IPR036793">
    <property type="entry name" value="Asp_carbatrfase_reg_N_sf"/>
</dbReference>
<dbReference type="NCBIfam" id="TIGR00240">
    <property type="entry name" value="ATCase_reg"/>
    <property type="match status" value="1"/>
</dbReference>
<dbReference type="PANTHER" id="PTHR35805">
    <property type="entry name" value="ASPARTATE CARBAMOYLTRANSFERASE REGULATORY CHAIN"/>
    <property type="match status" value="1"/>
</dbReference>
<dbReference type="PANTHER" id="PTHR35805:SF1">
    <property type="entry name" value="ASPARTATE CARBAMOYLTRANSFERASE REGULATORY CHAIN"/>
    <property type="match status" value="1"/>
</dbReference>
<dbReference type="Pfam" id="PF01948">
    <property type="entry name" value="PyrI"/>
    <property type="match status" value="1"/>
</dbReference>
<dbReference type="Pfam" id="PF02748">
    <property type="entry name" value="PyrI_C"/>
    <property type="match status" value="1"/>
</dbReference>
<dbReference type="SUPFAM" id="SSF57825">
    <property type="entry name" value="Aspartate carbamoyltransferase, Regulatory-chain, C-terminal domain"/>
    <property type="match status" value="1"/>
</dbReference>
<dbReference type="SUPFAM" id="SSF54893">
    <property type="entry name" value="Aspartate carbamoyltransferase, Regulatory-chain, N-terminal domain"/>
    <property type="match status" value="1"/>
</dbReference>
<comment type="function">
    <text evidence="1">Involved in allosteric regulation of aspartate carbamoyltransferase.</text>
</comment>
<comment type="cofactor">
    <cofactor evidence="1">
        <name>Zn(2+)</name>
        <dbReference type="ChEBI" id="CHEBI:29105"/>
    </cofactor>
    <text evidence="1">Binds 1 zinc ion per subunit.</text>
</comment>
<comment type="subunit">
    <text evidence="1">Contains catalytic and regulatory chains.</text>
</comment>
<comment type="similarity">
    <text evidence="1">Belongs to the PyrI family.</text>
</comment>
<proteinExistence type="inferred from homology"/>
<evidence type="ECO:0000255" key="1">
    <source>
        <dbReference type="HAMAP-Rule" id="MF_00002"/>
    </source>
</evidence>
<organism>
    <name type="scientific">Escherichia coli (strain SMS-3-5 / SECEC)</name>
    <dbReference type="NCBI Taxonomy" id="439855"/>
    <lineage>
        <taxon>Bacteria</taxon>
        <taxon>Pseudomonadati</taxon>
        <taxon>Pseudomonadota</taxon>
        <taxon>Gammaproteobacteria</taxon>
        <taxon>Enterobacterales</taxon>
        <taxon>Enterobacteriaceae</taxon>
        <taxon>Escherichia</taxon>
    </lineage>
</organism>
<gene>
    <name evidence="1" type="primary">pyrI</name>
    <name type="ordered locus">EcSMS35_4725</name>
</gene>
<keyword id="KW-0479">Metal-binding</keyword>
<keyword id="KW-0665">Pyrimidine biosynthesis</keyword>
<keyword id="KW-0862">Zinc</keyword>